<evidence type="ECO:0000250" key="1"/>
<evidence type="ECO:0000255" key="2"/>
<evidence type="ECO:0000305" key="3"/>
<organism>
    <name type="scientific">Neisseria meningitidis serogroup A / serotype 4A (strain DSM 15465 / Z2491)</name>
    <dbReference type="NCBI Taxonomy" id="122587"/>
    <lineage>
        <taxon>Bacteria</taxon>
        <taxon>Pseudomonadati</taxon>
        <taxon>Pseudomonadota</taxon>
        <taxon>Betaproteobacteria</taxon>
        <taxon>Neisseriales</taxon>
        <taxon>Neisseriaceae</taxon>
        <taxon>Neisseria</taxon>
    </lineage>
</organism>
<comment type="function">
    <text evidence="1">Multidrug efflux pump.</text>
</comment>
<comment type="subcellular location">
    <subcellularLocation>
        <location evidence="1">Cell inner membrane</location>
        <topology evidence="1">Multi-pass membrane protein</topology>
    </subcellularLocation>
</comment>
<comment type="similarity">
    <text evidence="3">Belongs to the multi antimicrobial extrusion (MATE) (TC 2.A.66.1) family.</text>
</comment>
<reference key="1">
    <citation type="journal article" date="2000" name="Nature">
        <title>Complete DNA sequence of a serogroup A strain of Neisseria meningitidis Z2491.</title>
        <authorList>
            <person name="Parkhill J."/>
            <person name="Achtman M."/>
            <person name="James K.D."/>
            <person name="Bentley S.D."/>
            <person name="Churcher C.M."/>
            <person name="Klee S.R."/>
            <person name="Morelli G."/>
            <person name="Basham D."/>
            <person name="Brown D."/>
            <person name="Chillingworth T."/>
            <person name="Davies R.M."/>
            <person name="Davis P."/>
            <person name="Devlin K."/>
            <person name="Feltwell T."/>
            <person name="Hamlin N."/>
            <person name="Holroyd S."/>
            <person name="Jagels K."/>
            <person name="Leather S."/>
            <person name="Moule S."/>
            <person name="Mungall K.L."/>
            <person name="Quail M.A."/>
            <person name="Rajandream M.A."/>
            <person name="Rutherford K.M."/>
            <person name="Simmonds M."/>
            <person name="Skelton J."/>
            <person name="Whitehead S."/>
            <person name="Spratt B.G."/>
            <person name="Barrell B.G."/>
        </authorList>
    </citation>
    <scope>NUCLEOTIDE SEQUENCE [LARGE SCALE GENOMIC DNA]</scope>
    <source>
        <strain>DSM 15465 / Z2491</strain>
    </source>
</reference>
<protein>
    <recommendedName>
        <fullName>Probable multidrug resistance protein NorM</fullName>
    </recommendedName>
    <alternativeName>
        <fullName>Multidrug-efflux transporter</fullName>
    </alternativeName>
</protein>
<gene>
    <name type="primary">norM</name>
    <name type="ordered locus">NMA1022</name>
</gene>
<keyword id="KW-0050">Antiport</keyword>
<keyword id="KW-0997">Cell inner membrane</keyword>
<keyword id="KW-1003">Cell membrane</keyword>
<keyword id="KW-0406">Ion transport</keyword>
<keyword id="KW-0472">Membrane</keyword>
<keyword id="KW-0812">Transmembrane</keyword>
<keyword id="KW-1133">Transmembrane helix</keyword>
<keyword id="KW-0813">Transport</keyword>
<feature type="chain" id="PRO_0000164225" description="Probable multidrug resistance protein NorM">
    <location>
        <begin position="1"/>
        <end position="459"/>
    </location>
</feature>
<feature type="transmembrane region" description="Helical" evidence="2">
    <location>
        <begin position="20"/>
        <end position="40"/>
    </location>
</feature>
<feature type="transmembrane region" description="Helical" evidence="2">
    <location>
        <begin position="53"/>
        <end position="73"/>
    </location>
</feature>
<feature type="transmembrane region" description="Helical" evidence="2">
    <location>
        <begin position="100"/>
        <end position="120"/>
    </location>
</feature>
<feature type="transmembrane region" description="Helical" evidence="2">
    <location>
        <begin position="132"/>
        <end position="152"/>
    </location>
</feature>
<feature type="transmembrane region" description="Helical" evidence="2">
    <location>
        <begin position="168"/>
        <end position="188"/>
    </location>
</feature>
<feature type="transmembrane region" description="Helical" evidence="2">
    <location>
        <begin position="202"/>
        <end position="222"/>
    </location>
</feature>
<feature type="transmembrane region" description="Helical" evidence="2">
    <location>
        <begin position="252"/>
        <end position="272"/>
    </location>
</feature>
<feature type="transmembrane region" description="Helical" evidence="2">
    <location>
        <begin position="285"/>
        <end position="305"/>
    </location>
</feature>
<feature type="transmembrane region" description="Helical" evidence="2">
    <location>
        <begin position="325"/>
        <end position="345"/>
    </location>
</feature>
<feature type="transmembrane region" description="Helical" evidence="2">
    <location>
        <begin position="358"/>
        <end position="378"/>
    </location>
</feature>
<feature type="transmembrane region" description="Helical" evidence="2">
    <location>
        <begin position="395"/>
        <end position="415"/>
    </location>
</feature>
<feature type="transmembrane region" description="Helical" evidence="2">
    <location>
        <begin position="423"/>
        <end position="443"/>
    </location>
</feature>
<proteinExistence type="inferred from homology"/>
<accession>Q9JV27</accession>
<accession>A1IR59</accession>
<sequence>MLLDLNRFSFSVFLKEVRLLTALALPMLLAQVAQVGIGFVDTVMAGGAGKEDLAAVALGSSAFATVYITFMGIMAALNPMIAQLYGAGKTDEVGETGRQGIWFGLFLGVFGMVLMWAAITPFRNWLTLSDYVEGTMAQYMLFTSLAMPAAMVHRALHAYASSLNRPRLIMLVSFAAFVLNVPLNYIFVYGKFGMPALGGAGCGLATMAVFWFSALALWIYIAKENFFRPFGLTAKFGKPDWAVFKQIWKIGAPIGLSYFLEASAFSFIVFLIAPFGEDYVAAQQVGISLSGILYMIPQSVGSAGTVRIGFSLGRREFSRARYISGVSLVSGWMLAVITVLSLVLFRSPLVSMYNNDPAVLSIAATVLLFAGLFQPADFTQCIASYALRGYKVTKVPMFIHAAAFWGCGLLPGYLLAYRFDMGIYGFWTALIASLTIAAIALVWCLELCSREMVRSHKAV</sequence>
<dbReference type="EMBL" id="AL157959">
    <property type="protein sequence ID" value="CAM08243.1"/>
    <property type="molecule type" value="Genomic_DNA"/>
</dbReference>
<dbReference type="PIR" id="D81950">
    <property type="entry name" value="D81950"/>
</dbReference>
<dbReference type="RefSeq" id="WP_002246103.1">
    <property type="nucleotide sequence ID" value="NC_003116.1"/>
</dbReference>
<dbReference type="SMR" id="Q9JV27"/>
<dbReference type="TCDB" id="2.A.66.1.10">
    <property type="family name" value="the multidrug/oligosaccharidyl-lipid/polysaccharide (mop) flippase superfamily"/>
</dbReference>
<dbReference type="EnsemblBacteria" id="CAM08243">
    <property type="protein sequence ID" value="CAM08243"/>
    <property type="gene ID" value="NMA1022"/>
</dbReference>
<dbReference type="GeneID" id="93386361"/>
<dbReference type="KEGG" id="nma:NMA1022"/>
<dbReference type="HOGENOM" id="CLU_012893_6_0_4"/>
<dbReference type="Proteomes" id="UP000000626">
    <property type="component" value="Chromosome"/>
</dbReference>
<dbReference type="GO" id="GO:0005886">
    <property type="term" value="C:plasma membrane"/>
    <property type="evidence" value="ECO:0007669"/>
    <property type="project" value="UniProtKB-SubCell"/>
</dbReference>
<dbReference type="GO" id="GO:0015297">
    <property type="term" value="F:antiporter activity"/>
    <property type="evidence" value="ECO:0007669"/>
    <property type="project" value="UniProtKB-KW"/>
</dbReference>
<dbReference type="GO" id="GO:0042910">
    <property type="term" value="F:xenobiotic transmembrane transporter activity"/>
    <property type="evidence" value="ECO:0007669"/>
    <property type="project" value="InterPro"/>
</dbReference>
<dbReference type="GO" id="GO:0006811">
    <property type="term" value="P:monoatomic ion transport"/>
    <property type="evidence" value="ECO:0007669"/>
    <property type="project" value="UniProtKB-KW"/>
</dbReference>
<dbReference type="CDD" id="cd13131">
    <property type="entry name" value="MATE_NorM_like"/>
    <property type="match status" value="1"/>
</dbReference>
<dbReference type="InterPro" id="IPR002528">
    <property type="entry name" value="MATE_fam"/>
</dbReference>
<dbReference type="InterPro" id="IPR050222">
    <property type="entry name" value="MATE_MdtK"/>
</dbReference>
<dbReference type="InterPro" id="IPR048279">
    <property type="entry name" value="MdtK-like"/>
</dbReference>
<dbReference type="NCBIfam" id="TIGR00797">
    <property type="entry name" value="matE"/>
    <property type="match status" value="1"/>
</dbReference>
<dbReference type="NCBIfam" id="NF000263">
    <property type="entry name" value="MATE_multi_NorM"/>
    <property type="match status" value="1"/>
</dbReference>
<dbReference type="PANTHER" id="PTHR43298:SF2">
    <property type="entry name" value="FMN_FAD EXPORTER YEEO-RELATED"/>
    <property type="match status" value="1"/>
</dbReference>
<dbReference type="PANTHER" id="PTHR43298">
    <property type="entry name" value="MULTIDRUG RESISTANCE PROTEIN NORM-RELATED"/>
    <property type="match status" value="1"/>
</dbReference>
<dbReference type="Pfam" id="PF01554">
    <property type="entry name" value="MatE"/>
    <property type="match status" value="2"/>
</dbReference>
<dbReference type="PIRSF" id="PIRSF006603">
    <property type="entry name" value="DinF"/>
    <property type="match status" value="1"/>
</dbReference>
<name>NORM_NEIMA</name>